<accession>P67304</accession>
<accession>Q99T75</accession>
<feature type="chain" id="PRO_0000171867" description="Putative membrane protein insertion efficiency factor">
    <location>
        <begin position="1"/>
        <end position="85"/>
    </location>
</feature>
<feature type="region of interest" description="Disordered" evidence="2">
    <location>
        <begin position="62"/>
        <end position="85"/>
    </location>
</feature>
<dbReference type="EMBL" id="BA000017">
    <property type="protein sequence ID" value="BAB57957.1"/>
    <property type="molecule type" value="Genomic_DNA"/>
</dbReference>
<dbReference type="KEGG" id="sav:SAV1795"/>
<dbReference type="HOGENOM" id="CLU_144811_6_0_9"/>
<dbReference type="PhylomeDB" id="P67304"/>
<dbReference type="Proteomes" id="UP000002481">
    <property type="component" value="Chromosome"/>
</dbReference>
<dbReference type="GO" id="GO:0005886">
    <property type="term" value="C:plasma membrane"/>
    <property type="evidence" value="ECO:0007669"/>
    <property type="project" value="UniProtKB-SubCell"/>
</dbReference>
<dbReference type="HAMAP" id="MF_00386">
    <property type="entry name" value="UPF0161_YidD"/>
    <property type="match status" value="1"/>
</dbReference>
<dbReference type="InterPro" id="IPR002696">
    <property type="entry name" value="Membr_insert_effic_factor_YidD"/>
</dbReference>
<dbReference type="NCBIfam" id="TIGR00278">
    <property type="entry name" value="membrane protein insertion efficiency factor YidD"/>
    <property type="match status" value="1"/>
</dbReference>
<dbReference type="PANTHER" id="PTHR33383">
    <property type="entry name" value="MEMBRANE PROTEIN INSERTION EFFICIENCY FACTOR-RELATED"/>
    <property type="match status" value="1"/>
</dbReference>
<dbReference type="PANTHER" id="PTHR33383:SF1">
    <property type="entry name" value="MEMBRANE PROTEIN INSERTION EFFICIENCY FACTOR-RELATED"/>
    <property type="match status" value="1"/>
</dbReference>
<dbReference type="Pfam" id="PF01809">
    <property type="entry name" value="YidD"/>
    <property type="match status" value="1"/>
</dbReference>
<dbReference type="SMART" id="SM01234">
    <property type="entry name" value="Haemolytic"/>
    <property type="match status" value="1"/>
</dbReference>
<reference key="1">
    <citation type="journal article" date="2001" name="Lancet">
        <title>Whole genome sequencing of meticillin-resistant Staphylococcus aureus.</title>
        <authorList>
            <person name="Kuroda M."/>
            <person name="Ohta T."/>
            <person name="Uchiyama I."/>
            <person name="Baba T."/>
            <person name="Yuzawa H."/>
            <person name="Kobayashi I."/>
            <person name="Cui L."/>
            <person name="Oguchi A."/>
            <person name="Aoki K."/>
            <person name="Nagai Y."/>
            <person name="Lian J.-Q."/>
            <person name="Ito T."/>
            <person name="Kanamori M."/>
            <person name="Matsumaru H."/>
            <person name="Maruyama A."/>
            <person name="Murakami H."/>
            <person name="Hosoyama A."/>
            <person name="Mizutani-Ui Y."/>
            <person name="Takahashi N.K."/>
            <person name="Sawano T."/>
            <person name="Inoue R."/>
            <person name="Kaito C."/>
            <person name="Sekimizu K."/>
            <person name="Hirakawa H."/>
            <person name="Kuhara S."/>
            <person name="Goto S."/>
            <person name="Yabuzaki J."/>
            <person name="Kanehisa M."/>
            <person name="Yamashita A."/>
            <person name="Oshima K."/>
            <person name="Furuya K."/>
            <person name="Yoshino C."/>
            <person name="Shiba T."/>
            <person name="Hattori M."/>
            <person name="Ogasawara N."/>
            <person name="Hayashi H."/>
            <person name="Hiramatsu K."/>
        </authorList>
    </citation>
    <scope>NUCLEOTIDE SEQUENCE [LARGE SCALE GENOMIC DNA]</scope>
    <source>
        <strain>Mu50 / ATCC 700699</strain>
    </source>
</reference>
<organism>
    <name type="scientific">Staphylococcus aureus (strain Mu50 / ATCC 700699)</name>
    <dbReference type="NCBI Taxonomy" id="158878"/>
    <lineage>
        <taxon>Bacteria</taxon>
        <taxon>Bacillati</taxon>
        <taxon>Bacillota</taxon>
        <taxon>Bacilli</taxon>
        <taxon>Bacillales</taxon>
        <taxon>Staphylococcaceae</taxon>
        <taxon>Staphylococcus</taxon>
    </lineage>
</organism>
<gene>
    <name type="ordered locus">SAV1795</name>
</gene>
<evidence type="ECO:0000255" key="1">
    <source>
        <dbReference type="HAMAP-Rule" id="MF_00386"/>
    </source>
</evidence>
<evidence type="ECO:0000256" key="2">
    <source>
        <dbReference type="SAM" id="MobiDB-lite"/>
    </source>
</evidence>
<sequence>MKKIFLAMIHFYQRFISPLTPPTCRFYPTCSEYTREAIQYHGAFKGLYLGIRRILKCHPLHKGGFDPVPLKKDKSASKHSHKHNH</sequence>
<proteinExistence type="inferred from homology"/>
<protein>
    <recommendedName>
        <fullName evidence="1">Putative membrane protein insertion efficiency factor</fullName>
    </recommendedName>
</protein>
<comment type="function">
    <text evidence="1">Could be involved in insertion of integral membrane proteins into the membrane.</text>
</comment>
<comment type="subcellular location">
    <subcellularLocation>
        <location evidence="1">Cell membrane</location>
        <topology evidence="1">Peripheral membrane protein</topology>
        <orientation evidence="1">Cytoplasmic side</orientation>
    </subcellularLocation>
</comment>
<comment type="similarity">
    <text evidence="1">Belongs to the UPF0161 family.</text>
</comment>
<keyword id="KW-1003">Cell membrane</keyword>
<keyword id="KW-0472">Membrane</keyword>
<name>YIDD_STAAM</name>